<gene>
    <name evidence="1" type="primary">tmcAL</name>
    <name type="ordered locus">BCAH820_3940</name>
</gene>
<organism>
    <name type="scientific">Bacillus cereus (strain AH820)</name>
    <dbReference type="NCBI Taxonomy" id="405535"/>
    <lineage>
        <taxon>Bacteria</taxon>
        <taxon>Bacillati</taxon>
        <taxon>Bacillota</taxon>
        <taxon>Bacilli</taxon>
        <taxon>Bacillales</taxon>
        <taxon>Bacillaceae</taxon>
        <taxon>Bacillus</taxon>
        <taxon>Bacillus cereus group</taxon>
    </lineage>
</organism>
<protein>
    <recommendedName>
        <fullName evidence="1">tRNA(Met) cytidine acetate ligase</fullName>
        <ecNumber evidence="1">6.3.4.-</ecNumber>
    </recommendedName>
</protein>
<dbReference type="EC" id="6.3.4.-" evidence="1"/>
<dbReference type="EMBL" id="CP001283">
    <property type="protein sequence ID" value="ACK88401.1"/>
    <property type="molecule type" value="Genomic_DNA"/>
</dbReference>
<dbReference type="SMR" id="B7JK13"/>
<dbReference type="KEGG" id="bcu:BCAH820_3940"/>
<dbReference type="HOGENOM" id="CLU_038915_0_2_9"/>
<dbReference type="Proteomes" id="UP000001363">
    <property type="component" value="Chromosome"/>
</dbReference>
<dbReference type="GO" id="GO:0005737">
    <property type="term" value="C:cytoplasm"/>
    <property type="evidence" value="ECO:0007669"/>
    <property type="project" value="UniProtKB-SubCell"/>
</dbReference>
<dbReference type="GO" id="GO:0005524">
    <property type="term" value="F:ATP binding"/>
    <property type="evidence" value="ECO:0007669"/>
    <property type="project" value="UniProtKB-KW"/>
</dbReference>
<dbReference type="GO" id="GO:0016879">
    <property type="term" value="F:ligase activity, forming carbon-nitrogen bonds"/>
    <property type="evidence" value="ECO:0007669"/>
    <property type="project" value="UniProtKB-UniRule"/>
</dbReference>
<dbReference type="GO" id="GO:0000049">
    <property type="term" value="F:tRNA binding"/>
    <property type="evidence" value="ECO:0007669"/>
    <property type="project" value="UniProtKB-KW"/>
</dbReference>
<dbReference type="GO" id="GO:0006400">
    <property type="term" value="P:tRNA modification"/>
    <property type="evidence" value="ECO:0007669"/>
    <property type="project" value="UniProtKB-UniRule"/>
</dbReference>
<dbReference type="Gene3D" id="3.40.50.620">
    <property type="entry name" value="HUPs"/>
    <property type="match status" value="1"/>
</dbReference>
<dbReference type="HAMAP" id="MF_01539">
    <property type="entry name" value="TmcAL"/>
    <property type="match status" value="1"/>
</dbReference>
<dbReference type="InterPro" id="IPR014729">
    <property type="entry name" value="Rossmann-like_a/b/a_fold"/>
</dbReference>
<dbReference type="InterPro" id="IPR008513">
    <property type="entry name" value="tRNA(Met)_cyd_acetate_ligase"/>
</dbReference>
<dbReference type="NCBIfam" id="NF010191">
    <property type="entry name" value="PRK13670.1"/>
    <property type="match status" value="1"/>
</dbReference>
<dbReference type="PANTHER" id="PTHR37825">
    <property type="entry name" value="TRNA(MET) CYTIDINE ACETATE LIGASE"/>
    <property type="match status" value="1"/>
</dbReference>
<dbReference type="PANTHER" id="PTHR37825:SF1">
    <property type="entry name" value="TRNA(MET) CYTIDINE ACETATE LIGASE"/>
    <property type="match status" value="1"/>
</dbReference>
<dbReference type="Pfam" id="PF05636">
    <property type="entry name" value="HIGH_NTase1"/>
    <property type="match status" value="1"/>
</dbReference>
<dbReference type="SUPFAM" id="SSF52374">
    <property type="entry name" value="Nucleotidylyl transferase"/>
    <property type="match status" value="1"/>
</dbReference>
<evidence type="ECO:0000255" key="1">
    <source>
        <dbReference type="HAMAP-Rule" id="MF_01539"/>
    </source>
</evidence>
<name>TMCAL_BACC0</name>
<feature type="chain" id="PRO_1000198851" description="tRNA(Met) cytidine acetate ligase">
    <location>
        <begin position="1"/>
        <end position="393"/>
    </location>
</feature>
<feature type="binding site" evidence="1">
    <location>
        <position position="81"/>
    </location>
    <ligand>
        <name>ATP</name>
        <dbReference type="ChEBI" id="CHEBI:30616"/>
    </ligand>
</feature>
<feature type="binding site" evidence="1">
    <location>
        <position position="142"/>
    </location>
    <ligand>
        <name>ATP</name>
        <dbReference type="ChEBI" id="CHEBI:30616"/>
    </ligand>
</feature>
<feature type="binding site" evidence="1">
    <location>
        <position position="167"/>
    </location>
    <ligand>
        <name>ATP</name>
        <dbReference type="ChEBI" id="CHEBI:30616"/>
    </ligand>
</feature>
<sequence length="393" mass="45379">MQQTKKLTHSDITIAVMSGPFLQRGEPALVSKWYRTKMALACGVDLVVELPYAFSTQKAETFANGAISILNALHVSEICFGSEDGQIENFYNTISVQKNEEETFNRLVKQFMNAGNSYAKATSEAFLHILSSEKNIDMSQPNNILGFQYIKAILMQNSSMQAQTIKRFASHYHDETFNDQHIASATSIRKQLFSENSSFTEIESFIPKATASLLASYKQNYGTLHNWEQYFSFFKYKLMTMSPEDLRHIYEIEEGLEHRILSKIQTSSSFHLFMEALKTKRYTWTRLQRACTHILTNTTKEEIYCANIEQHAPYIRLLGMSQKGQTYLSKNKKKIELPILTHTKTFDHPTLHIERKANSVYFSIMKEPLRTQLLKRDATHHPIRYDETTAKFL</sequence>
<proteinExistence type="inferred from homology"/>
<comment type="function">
    <text evidence="1">Catalyzes the formation of N(4)-acetylcytidine (ac(4)C) at the wobble position of elongator tRNA(Met), using acetate and ATP as substrates. First activates an acetate ion to form acetyladenylate (Ac-AMP) and then transfers the acetyl group to tRNA to form ac(4)C34.</text>
</comment>
<comment type="catalytic activity">
    <reaction evidence="1">
        <text>cytidine(34) in elongator tRNA(Met) + acetate + ATP = N(4)-acetylcytidine(34) in elongator tRNA(Met) + AMP + diphosphate</text>
        <dbReference type="Rhea" id="RHEA:58144"/>
        <dbReference type="Rhea" id="RHEA-COMP:10693"/>
        <dbReference type="Rhea" id="RHEA-COMP:10694"/>
        <dbReference type="ChEBI" id="CHEBI:30089"/>
        <dbReference type="ChEBI" id="CHEBI:30616"/>
        <dbReference type="ChEBI" id="CHEBI:33019"/>
        <dbReference type="ChEBI" id="CHEBI:74900"/>
        <dbReference type="ChEBI" id="CHEBI:82748"/>
        <dbReference type="ChEBI" id="CHEBI:456215"/>
    </reaction>
</comment>
<comment type="subcellular location">
    <subcellularLocation>
        <location evidence="1">Cytoplasm</location>
    </subcellularLocation>
</comment>
<comment type="similarity">
    <text evidence="1">Belongs to the TmcAL family.</text>
</comment>
<reference key="1">
    <citation type="submission" date="2008-10" db="EMBL/GenBank/DDBJ databases">
        <title>Genome sequence of Bacillus cereus AH820.</title>
        <authorList>
            <person name="Dodson R.J."/>
            <person name="Durkin A.S."/>
            <person name="Rosovitz M.J."/>
            <person name="Rasko D.A."/>
            <person name="Hoffmaster A."/>
            <person name="Ravel J."/>
            <person name="Sutton G."/>
        </authorList>
    </citation>
    <scope>NUCLEOTIDE SEQUENCE [LARGE SCALE GENOMIC DNA]</scope>
    <source>
        <strain>AH820</strain>
    </source>
</reference>
<keyword id="KW-0067">ATP-binding</keyword>
<keyword id="KW-0963">Cytoplasm</keyword>
<keyword id="KW-0436">Ligase</keyword>
<keyword id="KW-0547">Nucleotide-binding</keyword>
<keyword id="KW-0694">RNA-binding</keyword>
<keyword id="KW-0819">tRNA processing</keyword>
<keyword id="KW-0820">tRNA-binding</keyword>
<accession>B7JK13</accession>